<gene>
    <name evidence="1" type="primary">secA</name>
    <name type="ordered locus">SSPA0134</name>
</gene>
<reference key="1">
    <citation type="journal article" date="2009" name="BMC Genomics">
        <title>Pseudogene accumulation in the evolutionary histories of Salmonella enterica serovars Paratyphi A and Typhi.</title>
        <authorList>
            <person name="Holt K.E."/>
            <person name="Thomson N.R."/>
            <person name="Wain J."/>
            <person name="Langridge G.C."/>
            <person name="Hasan R."/>
            <person name="Bhutta Z.A."/>
            <person name="Quail M.A."/>
            <person name="Norbertczak H."/>
            <person name="Walker D."/>
            <person name="Simmonds M."/>
            <person name="White B."/>
            <person name="Bason N."/>
            <person name="Mungall K."/>
            <person name="Dougan G."/>
            <person name="Parkhill J."/>
        </authorList>
    </citation>
    <scope>NUCLEOTIDE SEQUENCE [LARGE SCALE GENOMIC DNA]</scope>
    <source>
        <strain>AKU_12601</strain>
    </source>
</reference>
<sequence>MLIKLLTKVFGSRNDRTLRRMRKAVSLINAMEPEMEKLSDDELKAKTNEFRARIEKGESVESLIPEAFAVVREASKRVFGMRHFDVQLLGGMVLNDRCIAEMRTGEGKTLTATLPAYLNALSGKGVHVVTVNDYLAQRDAENNRPLFEFLGMSVGINLPGMPAPAKREAYAADITYGTNNEYGFDYLRDNMAFSPEERVQRKLHYALVDEVDSILIDEARTPLIISGPAEDSSEMYKKVNKIIPHLIRQEKEDSDTFQGEGHFSVDEKARQVNLTERGLVLIEELLVQEGIMDEGESLYSPGNIMLMHHVTAALRAHALFTRDVDYIVKDGEVIIVDEHTGRTMQGRRWSDGLHQAVEAKEGVEIQNENQTLASITFQNYFRLYEKLAGMTGTADTEAFEFSSIYKLDTVVVPTNRPMIRKDLPDLVYMTEAEKIQAIIEDIKERTANGQPVLVGTISIEKSEVVSRELTKAGIKHNVLNAKFHANEAGIVAQAGYPAAVTIATNMAGRGTDIMLGGSWQAEVAALEAPTEEQIAQIKADWQVRHDAVLAAGGLHIIGTERHESRRIDNQLRGRSGRQGDPGSSRFYLSMEDALMRIFASDRVSGMMRKLGMKPGEAIEHPWVTKAIANAQRKVESRNFDIRKQLLEYDDVANDQRRAIYTQRNELLDVSDVSDTINSIREDVFKATIDAYIPPQSLEEMWDILGLQERLKNDFDLEMPIAEWLDKEPELHEETLRERILAQSIEVYQRKEEVVGAEMMRHFEKGVMLQTLDSLWKEHLAAMDYLRQGIHLRGYAQKDPKQEYKRESFAMFAAMLESLKYEVISTLSKVQVRMPEEVEAMEMQRREEAERLAQMQQLSHQDDDAAVAADLAAQTGERKIGRNDPCPCGSGKKYKQCHGRLS</sequence>
<name>SECA_SALPK</name>
<dbReference type="EC" id="7.4.2.8" evidence="1"/>
<dbReference type="EMBL" id="FM200053">
    <property type="protein sequence ID" value="CAR58245.1"/>
    <property type="molecule type" value="Genomic_DNA"/>
</dbReference>
<dbReference type="RefSeq" id="WP_000905752.1">
    <property type="nucleotide sequence ID" value="NC_011147.1"/>
</dbReference>
<dbReference type="SMR" id="B5BLD0"/>
<dbReference type="KEGG" id="sek:SSPA0134"/>
<dbReference type="HOGENOM" id="CLU_005314_3_0_6"/>
<dbReference type="Proteomes" id="UP000001869">
    <property type="component" value="Chromosome"/>
</dbReference>
<dbReference type="GO" id="GO:0031522">
    <property type="term" value="C:cell envelope Sec protein transport complex"/>
    <property type="evidence" value="ECO:0007669"/>
    <property type="project" value="TreeGrafter"/>
</dbReference>
<dbReference type="GO" id="GO:0005829">
    <property type="term" value="C:cytosol"/>
    <property type="evidence" value="ECO:0007669"/>
    <property type="project" value="TreeGrafter"/>
</dbReference>
<dbReference type="GO" id="GO:0005886">
    <property type="term" value="C:plasma membrane"/>
    <property type="evidence" value="ECO:0007669"/>
    <property type="project" value="UniProtKB-SubCell"/>
</dbReference>
<dbReference type="GO" id="GO:0005524">
    <property type="term" value="F:ATP binding"/>
    <property type="evidence" value="ECO:0007669"/>
    <property type="project" value="UniProtKB-UniRule"/>
</dbReference>
<dbReference type="GO" id="GO:0046872">
    <property type="term" value="F:metal ion binding"/>
    <property type="evidence" value="ECO:0007669"/>
    <property type="project" value="UniProtKB-KW"/>
</dbReference>
<dbReference type="GO" id="GO:0008564">
    <property type="term" value="F:protein-exporting ATPase activity"/>
    <property type="evidence" value="ECO:0007669"/>
    <property type="project" value="UniProtKB-EC"/>
</dbReference>
<dbReference type="GO" id="GO:0065002">
    <property type="term" value="P:intracellular protein transmembrane transport"/>
    <property type="evidence" value="ECO:0007669"/>
    <property type="project" value="UniProtKB-UniRule"/>
</dbReference>
<dbReference type="GO" id="GO:0017038">
    <property type="term" value="P:protein import"/>
    <property type="evidence" value="ECO:0007669"/>
    <property type="project" value="InterPro"/>
</dbReference>
<dbReference type="GO" id="GO:0006605">
    <property type="term" value="P:protein targeting"/>
    <property type="evidence" value="ECO:0007669"/>
    <property type="project" value="UniProtKB-UniRule"/>
</dbReference>
<dbReference type="GO" id="GO:0043952">
    <property type="term" value="P:protein transport by the Sec complex"/>
    <property type="evidence" value="ECO:0007669"/>
    <property type="project" value="TreeGrafter"/>
</dbReference>
<dbReference type="CDD" id="cd17928">
    <property type="entry name" value="DEXDc_SecA"/>
    <property type="match status" value="1"/>
</dbReference>
<dbReference type="CDD" id="cd18803">
    <property type="entry name" value="SF2_C_secA"/>
    <property type="match status" value="1"/>
</dbReference>
<dbReference type="FunFam" id="1.10.3060.10:FF:000001">
    <property type="entry name" value="Preprotein translocase subunit SecA"/>
    <property type="match status" value="1"/>
</dbReference>
<dbReference type="FunFam" id="3.40.50.300:FF:000081">
    <property type="entry name" value="Preprotein translocase subunit SecA"/>
    <property type="match status" value="1"/>
</dbReference>
<dbReference type="FunFam" id="3.40.50.300:FF:000113">
    <property type="entry name" value="Preprotein translocase subunit SecA"/>
    <property type="match status" value="1"/>
</dbReference>
<dbReference type="FunFam" id="3.90.1440.10:FF:000001">
    <property type="entry name" value="Preprotein translocase subunit SecA"/>
    <property type="match status" value="1"/>
</dbReference>
<dbReference type="Gene3D" id="1.10.3060.10">
    <property type="entry name" value="Helical scaffold and wing domains of SecA"/>
    <property type="match status" value="1"/>
</dbReference>
<dbReference type="Gene3D" id="3.40.50.300">
    <property type="entry name" value="P-loop containing nucleotide triphosphate hydrolases"/>
    <property type="match status" value="2"/>
</dbReference>
<dbReference type="Gene3D" id="3.90.1440.10">
    <property type="entry name" value="SecA, preprotein cross-linking domain"/>
    <property type="match status" value="1"/>
</dbReference>
<dbReference type="HAMAP" id="MF_01382">
    <property type="entry name" value="SecA"/>
    <property type="match status" value="1"/>
</dbReference>
<dbReference type="InterPro" id="IPR014001">
    <property type="entry name" value="Helicase_ATP-bd"/>
</dbReference>
<dbReference type="InterPro" id="IPR027417">
    <property type="entry name" value="P-loop_NTPase"/>
</dbReference>
<dbReference type="InterPro" id="IPR004027">
    <property type="entry name" value="SEC_C_motif"/>
</dbReference>
<dbReference type="InterPro" id="IPR000185">
    <property type="entry name" value="SecA"/>
</dbReference>
<dbReference type="InterPro" id="IPR020937">
    <property type="entry name" value="SecA_CS"/>
</dbReference>
<dbReference type="InterPro" id="IPR011115">
    <property type="entry name" value="SecA_DEAD"/>
</dbReference>
<dbReference type="InterPro" id="IPR014018">
    <property type="entry name" value="SecA_motor_DEAD"/>
</dbReference>
<dbReference type="InterPro" id="IPR011130">
    <property type="entry name" value="SecA_preprotein_X-link_dom"/>
</dbReference>
<dbReference type="InterPro" id="IPR044722">
    <property type="entry name" value="SecA_SF2_C"/>
</dbReference>
<dbReference type="InterPro" id="IPR011116">
    <property type="entry name" value="SecA_Wing/Scaffold"/>
</dbReference>
<dbReference type="InterPro" id="IPR036266">
    <property type="entry name" value="SecA_Wing/Scaffold_sf"/>
</dbReference>
<dbReference type="InterPro" id="IPR036670">
    <property type="entry name" value="SecA_X-link_sf"/>
</dbReference>
<dbReference type="NCBIfam" id="NF009538">
    <property type="entry name" value="PRK12904.1"/>
    <property type="match status" value="1"/>
</dbReference>
<dbReference type="NCBIfam" id="TIGR00963">
    <property type="entry name" value="secA"/>
    <property type="match status" value="1"/>
</dbReference>
<dbReference type="PANTHER" id="PTHR30612:SF0">
    <property type="entry name" value="CHLOROPLAST PROTEIN-TRANSPORTING ATPASE"/>
    <property type="match status" value="1"/>
</dbReference>
<dbReference type="PANTHER" id="PTHR30612">
    <property type="entry name" value="SECA INNER MEMBRANE COMPONENT OF SEC PROTEIN SECRETION SYSTEM"/>
    <property type="match status" value="1"/>
</dbReference>
<dbReference type="Pfam" id="PF21090">
    <property type="entry name" value="P-loop_SecA"/>
    <property type="match status" value="1"/>
</dbReference>
<dbReference type="Pfam" id="PF02810">
    <property type="entry name" value="SEC-C"/>
    <property type="match status" value="1"/>
</dbReference>
<dbReference type="Pfam" id="PF07517">
    <property type="entry name" value="SecA_DEAD"/>
    <property type="match status" value="1"/>
</dbReference>
<dbReference type="Pfam" id="PF01043">
    <property type="entry name" value="SecA_PP_bind"/>
    <property type="match status" value="1"/>
</dbReference>
<dbReference type="Pfam" id="PF07516">
    <property type="entry name" value="SecA_SW"/>
    <property type="match status" value="1"/>
</dbReference>
<dbReference type="PRINTS" id="PR00906">
    <property type="entry name" value="SECA"/>
</dbReference>
<dbReference type="SMART" id="SM00957">
    <property type="entry name" value="SecA_DEAD"/>
    <property type="match status" value="1"/>
</dbReference>
<dbReference type="SMART" id="SM00958">
    <property type="entry name" value="SecA_PP_bind"/>
    <property type="match status" value="1"/>
</dbReference>
<dbReference type="SUPFAM" id="SSF81886">
    <property type="entry name" value="Helical scaffold and wing domains of SecA"/>
    <property type="match status" value="1"/>
</dbReference>
<dbReference type="SUPFAM" id="SSF52540">
    <property type="entry name" value="P-loop containing nucleoside triphosphate hydrolases"/>
    <property type="match status" value="2"/>
</dbReference>
<dbReference type="SUPFAM" id="SSF81767">
    <property type="entry name" value="Pre-protein crosslinking domain of SecA"/>
    <property type="match status" value="1"/>
</dbReference>
<dbReference type="PROSITE" id="PS01312">
    <property type="entry name" value="SECA"/>
    <property type="match status" value="1"/>
</dbReference>
<dbReference type="PROSITE" id="PS51196">
    <property type="entry name" value="SECA_MOTOR_DEAD"/>
    <property type="match status" value="1"/>
</dbReference>
<proteinExistence type="inferred from homology"/>
<protein>
    <recommendedName>
        <fullName evidence="1">Protein translocase subunit SecA</fullName>
        <ecNumber evidence="1">7.4.2.8</ecNumber>
    </recommendedName>
</protein>
<organism>
    <name type="scientific">Salmonella paratyphi A (strain AKU_12601)</name>
    <dbReference type="NCBI Taxonomy" id="554290"/>
    <lineage>
        <taxon>Bacteria</taxon>
        <taxon>Pseudomonadati</taxon>
        <taxon>Pseudomonadota</taxon>
        <taxon>Gammaproteobacteria</taxon>
        <taxon>Enterobacterales</taxon>
        <taxon>Enterobacteriaceae</taxon>
        <taxon>Salmonella</taxon>
    </lineage>
</organism>
<accession>B5BLD0</accession>
<keyword id="KW-0067">ATP-binding</keyword>
<keyword id="KW-0997">Cell inner membrane</keyword>
<keyword id="KW-1003">Cell membrane</keyword>
<keyword id="KW-0963">Cytoplasm</keyword>
<keyword id="KW-0472">Membrane</keyword>
<keyword id="KW-0479">Metal-binding</keyword>
<keyword id="KW-0547">Nucleotide-binding</keyword>
<keyword id="KW-0653">Protein transport</keyword>
<keyword id="KW-1278">Translocase</keyword>
<keyword id="KW-0811">Translocation</keyword>
<keyword id="KW-0813">Transport</keyword>
<keyword id="KW-0862">Zinc</keyword>
<comment type="function">
    <text evidence="1">Part of the Sec protein translocase complex. Interacts with the SecYEG preprotein conducting channel. Has a central role in coupling the hydrolysis of ATP to the transfer of proteins into and across the cell membrane, serving both as a receptor for the preprotein-SecB complex and as an ATP-driven molecular motor driving the stepwise translocation of polypeptide chains across the membrane.</text>
</comment>
<comment type="catalytic activity">
    <reaction evidence="1">
        <text>ATP + H2O + cellular proteinSide 1 = ADP + phosphate + cellular proteinSide 2.</text>
        <dbReference type="EC" id="7.4.2.8"/>
    </reaction>
</comment>
<comment type="cofactor">
    <cofactor evidence="1">
        <name>Zn(2+)</name>
        <dbReference type="ChEBI" id="CHEBI:29105"/>
    </cofactor>
    <text evidence="1">May bind 1 zinc ion per subunit.</text>
</comment>
<comment type="subunit">
    <text evidence="1">Monomer and homodimer. Part of the essential Sec protein translocation apparatus which comprises SecA, SecYEG and auxiliary proteins SecDF-YajC and YidC.</text>
</comment>
<comment type="subcellular location">
    <subcellularLocation>
        <location evidence="1">Cell inner membrane</location>
        <topology evidence="1">Peripheral membrane protein</topology>
        <orientation evidence="1">Cytoplasmic side</orientation>
    </subcellularLocation>
    <subcellularLocation>
        <location evidence="1">Cytoplasm</location>
    </subcellularLocation>
    <text evidence="1">Distribution is 50-50.</text>
</comment>
<comment type="induction">
    <text evidence="1">Repressed under conditions of excess protein secretion capacity and derepressed when protein secretion becomes limiting. This is regulated by SecM.</text>
</comment>
<comment type="similarity">
    <text evidence="1">Belongs to the SecA family.</text>
</comment>
<feature type="chain" id="PRO_1000145059" description="Protein translocase subunit SecA">
    <location>
        <begin position="1"/>
        <end position="901"/>
    </location>
</feature>
<feature type="binding site" evidence="1">
    <location>
        <position position="87"/>
    </location>
    <ligand>
        <name>ATP</name>
        <dbReference type="ChEBI" id="CHEBI:30616"/>
    </ligand>
</feature>
<feature type="binding site" evidence="1">
    <location>
        <begin position="105"/>
        <end position="109"/>
    </location>
    <ligand>
        <name>ATP</name>
        <dbReference type="ChEBI" id="CHEBI:30616"/>
    </ligand>
</feature>
<feature type="binding site" evidence="1">
    <location>
        <position position="512"/>
    </location>
    <ligand>
        <name>ATP</name>
        <dbReference type="ChEBI" id="CHEBI:30616"/>
    </ligand>
</feature>
<feature type="binding site" evidence="1">
    <location>
        <position position="885"/>
    </location>
    <ligand>
        <name>Zn(2+)</name>
        <dbReference type="ChEBI" id="CHEBI:29105"/>
    </ligand>
</feature>
<feature type="binding site" evidence="1">
    <location>
        <position position="887"/>
    </location>
    <ligand>
        <name>Zn(2+)</name>
        <dbReference type="ChEBI" id="CHEBI:29105"/>
    </ligand>
</feature>
<feature type="binding site" evidence="1">
    <location>
        <position position="896"/>
    </location>
    <ligand>
        <name>Zn(2+)</name>
        <dbReference type="ChEBI" id="CHEBI:29105"/>
    </ligand>
</feature>
<feature type="binding site" evidence="1">
    <location>
        <position position="897"/>
    </location>
    <ligand>
        <name>Zn(2+)</name>
        <dbReference type="ChEBI" id="CHEBI:29105"/>
    </ligand>
</feature>
<evidence type="ECO:0000255" key="1">
    <source>
        <dbReference type="HAMAP-Rule" id="MF_01382"/>
    </source>
</evidence>